<sequence>MTWPSEARPNINMEYRLHTVKVYVMMEDKQWKNVGTGQISSKYSEQLQGVCLLVHSLSDGSPIMECKIHPNVPYQKQQGKIIIWSEAKNHGMAIHFQEPNDCQEIWEDICQIQGKDPHVEITQELTDDLETFEHMPLIWNWVEMSNCEIHTLKNIAELFPFVFEMPSQKERLALFLENEGYIKKLLQLFHTCEKLKNMEGLYYLHNIIKGILFLNNTRLFNIMFSDEFFMDIVGCLEYDPALDQPKQYREFLTQNSKFKEVIPIIHSQLRQKIQQTYRMQYVHDIMLPTPSIFQTNLLSDITTMIFFNKINIITMIQEDENFLLEVFSQLKDNSIGDERRIELLLFLKEFCEFAKTLQSQKKNELLKTLIKLGIMSVLKVVVHMNDYQIQVGALDIFAYLVEYSPCLVRAYAMEEAQDSEDNDDLLINIMIKQMICDFDPEFSQGIIMTAVLHELLNPENMRTTAKGCERKVFLNFFYKRYMRKLIAPILSIRVKYDSNDNRVYICPDNYQNAQLLGAVLEILTFCVQYHSMYIKHYIFSNNLLRSILVLMSSKHTFLILCAVRFMRKIIGLKDKMYNHYIIKKNLFEPVVNAFMHNGHRYNMLNSAIIELFEFIRKENITSLIVNIVENFFRAFKSIEYVQTFKGLKTKYEEEKKRKSQRRKNLHSIMHPKMYYRHIEDMEVKVKADICCRGIIEEEERQGGGEEGAILPMGSDFTNNYDIFMKNKDTNESESAIEGQKIKSSEASECCPSHGDASATRMSRSHCSSLVPLVDYLYDTDDENDDDPYGNDKHEDEHEDEDEEPPPKRPNLST</sequence>
<dbReference type="EMBL" id="AK132812">
    <property type="protein sequence ID" value="BAE21372.1"/>
    <property type="molecule type" value="mRNA"/>
</dbReference>
<dbReference type="EMBL" id="AL672285">
    <property type="status" value="NOT_ANNOTATED_CDS"/>
    <property type="molecule type" value="Genomic_DNA"/>
</dbReference>
<dbReference type="CCDS" id="CCDS53129.1"/>
<dbReference type="RefSeq" id="NP_001029052.2">
    <property type="nucleotide sequence ID" value="NM_001033880.3"/>
</dbReference>
<dbReference type="FunCoup" id="Q3V0Y1">
    <property type="interactions" value="43"/>
</dbReference>
<dbReference type="STRING" id="10090.ENSMUSP00000085471"/>
<dbReference type="iPTMnet" id="Q3V0Y1"/>
<dbReference type="PhosphoSitePlus" id="Q3V0Y1"/>
<dbReference type="PaxDb" id="10090-ENSMUSP00000085471"/>
<dbReference type="Ensembl" id="ENSMUST00000088146.3">
    <property type="protein sequence ID" value="ENSMUSP00000085471.3"/>
    <property type="gene ID" value="ENSMUSG00000035387.6"/>
</dbReference>
<dbReference type="GeneID" id="245511"/>
<dbReference type="KEGG" id="mmu:245511"/>
<dbReference type="UCSC" id="uc012hlr.1">
    <property type="organism name" value="mouse"/>
</dbReference>
<dbReference type="AGR" id="MGI:3588286"/>
<dbReference type="CTD" id="245511"/>
<dbReference type="MGI" id="MGI:3588286">
    <property type="gene designation" value="Ppp4r3c1"/>
</dbReference>
<dbReference type="VEuPathDB" id="HostDB:ENSMUSG00000035387"/>
<dbReference type="eggNOG" id="KOG2175">
    <property type="taxonomic scope" value="Eukaryota"/>
</dbReference>
<dbReference type="GeneTree" id="ENSGT00390000018199"/>
<dbReference type="HOGENOM" id="CLU_004909_3_0_1"/>
<dbReference type="InParanoid" id="Q3V0Y1"/>
<dbReference type="OMA" id="CEFSQAL"/>
<dbReference type="OrthoDB" id="27483at2759"/>
<dbReference type="PhylomeDB" id="Q3V0Y1"/>
<dbReference type="TreeFam" id="TF315190"/>
<dbReference type="BioGRID-ORCS" id="245511">
    <property type="hits" value="0 hits in 78 CRISPR screens"/>
</dbReference>
<dbReference type="PRO" id="PR:Q3V0Y1"/>
<dbReference type="Proteomes" id="UP000000589">
    <property type="component" value="Chromosome X"/>
</dbReference>
<dbReference type="RNAct" id="Q3V0Y1">
    <property type="molecule type" value="protein"/>
</dbReference>
<dbReference type="Bgee" id="ENSMUSG00000035387">
    <property type="expression patterns" value="Expressed in spermatid and 2 other cell types or tissues"/>
</dbReference>
<dbReference type="GO" id="GO:0005634">
    <property type="term" value="C:nucleus"/>
    <property type="evidence" value="ECO:0007669"/>
    <property type="project" value="UniProtKB-ARBA"/>
</dbReference>
<dbReference type="GO" id="GO:0019888">
    <property type="term" value="F:protein phosphatase regulator activity"/>
    <property type="evidence" value="ECO:0007669"/>
    <property type="project" value="InterPro"/>
</dbReference>
<dbReference type="Gene3D" id="2.30.29.30">
    <property type="entry name" value="Pleckstrin-homology domain (PH domain)/Phosphotyrosine-binding domain (PTB)"/>
    <property type="match status" value="1"/>
</dbReference>
<dbReference type="InterPro" id="IPR016024">
    <property type="entry name" value="ARM-type_fold"/>
</dbReference>
<dbReference type="InterPro" id="IPR055236">
    <property type="entry name" value="EVH1_PP4R3"/>
</dbReference>
<dbReference type="InterPro" id="IPR006887">
    <property type="entry name" value="P4R3-like_central_dom"/>
</dbReference>
<dbReference type="InterPro" id="IPR011993">
    <property type="entry name" value="PH-like_dom_sf"/>
</dbReference>
<dbReference type="InterPro" id="IPR051137">
    <property type="entry name" value="PP4R3-like"/>
</dbReference>
<dbReference type="PANTHER" id="PTHR23318">
    <property type="entry name" value="ATP SYNTHASE GAMMA-RELATED"/>
    <property type="match status" value="1"/>
</dbReference>
<dbReference type="PANTHER" id="PTHR23318:SF19">
    <property type="entry name" value="PROTEIN PPP4R3C"/>
    <property type="match status" value="1"/>
</dbReference>
<dbReference type="Pfam" id="PF22972">
    <property type="entry name" value="EVH1_PP4R3"/>
    <property type="match status" value="1"/>
</dbReference>
<dbReference type="Pfam" id="PF04802">
    <property type="entry name" value="PP4R3"/>
    <property type="match status" value="1"/>
</dbReference>
<dbReference type="SUPFAM" id="SSF48371">
    <property type="entry name" value="ARM repeat"/>
    <property type="match status" value="1"/>
</dbReference>
<dbReference type="SUPFAM" id="SSF50729">
    <property type="entry name" value="PH domain-like"/>
    <property type="match status" value="1"/>
</dbReference>
<reference key="1">
    <citation type="journal article" date="2005" name="Science">
        <title>The transcriptional landscape of the mammalian genome.</title>
        <authorList>
            <person name="Carninci P."/>
            <person name="Kasukawa T."/>
            <person name="Katayama S."/>
            <person name="Gough J."/>
            <person name="Frith M.C."/>
            <person name="Maeda N."/>
            <person name="Oyama R."/>
            <person name="Ravasi T."/>
            <person name="Lenhard B."/>
            <person name="Wells C."/>
            <person name="Kodzius R."/>
            <person name="Shimokawa K."/>
            <person name="Bajic V.B."/>
            <person name="Brenner S.E."/>
            <person name="Batalov S."/>
            <person name="Forrest A.R."/>
            <person name="Zavolan M."/>
            <person name="Davis M.J."/>
            <person name="Wilming L.G."/>
            <person name="Aidinis V."/>
            <person name="Allen J.E."/>
            <person name="Ambesi-Impiombato A."/>
            <person name="Apweiler R."/>
            <person name="Aturaliya R.N."/>
            <person name="Bailey T.L."/>
            <person name="Bansal M."/>
            <person name="Baxter L."/>
            <person name="Beisel K.W."/>
            <person name="Bersano T."/>
            <person name="Bono H."/>
            <person name="Chalk A.M."/>
            <person name="Chiu K.P."/>
            <person name="Choudhary V."/>
            <person name="Christoffels A."/>
            <person name="Clutterbuck D.R."/>
            <person name="Crowe M.L."/>
            <person name="Dalla E."/>
            <person name="Dalrymple B.P."/>
            <person name="de Bono B."/>
            <person name="Della Gatta G."/>
            <person name="di Bernardo D."/>
            <person name="Down T."/>
            <person name="Engstrom P."/>
            <person name="Fagiolini M."/>
            <person name="Faulkner G."/>
            <person name="Fletcher C.F."/>
            <person name="Fukushima T."/>
            <person name="Furuno M."/>
            <person name="Futaki S."/>
            <person name="Gariboldi M."/>
            <person name="Georgii-Hemming P."/>
            <person name="Gingeras T.R."/>
            <person name="Gojobori T."/>
            <person name="Green R.E."/>
            <person name="Gustincich S."/>
            <person name="Harbers M."/>
            <person name="Hayashi Y."/>
            <person name="Hensch T.K."/>
            <person name="Hirokawa N."/>
            <person name="Hill D."/>
            <person name="Huminiecki L."/>
            <person name="Iacono M."/>
            <person name="Ikeo K."/>
            <person name="Iwama A."/>
            <person name="Ishikawa T."/>
            <person name="Jakt M."/>
            <person name="Kanapin A."/>
            <person name="Katoh M."/>
            <person name="Kawasawa Y."/>
            <person name="Kelso J."/>
            <person name="Kitamura H."/>
            <person name="Kitano H."/>
            <person name="Kollias G."/>
            <person name="Krishnan S.P."/>
            <person name="Kruger A."/>
            <person name="Kummerfeld S.K."/>
            <person name="Kurochkin I.V."/>
            <person name="Lareau L.F."/>
            <person name="Lazarevic D."/>
            <person name="Lipovich L."/>
            <person name="Liu J."/>
            <person name="Liuni S."/>
            <person name="McWilliam S."/>
            <person name="Madan Babu M."/>
            <person name="Madera M."/>
            <person name="Marchionni L."/>
            <person name="Matsuda H."/>
            <person name="Matsuzawa S."/>
            <person name="Miki H."/>
            <person name="Mignone F."/>
            <person name="Miyake S."/>
            <person name="Morris K."/>
            <person name="Mottagui-Tabar S."/>
            <person name="Mulder N."/>
            <person name="Nakano N."/>
            <person name="Nakauchi H."/>
            <person name="Ng P."/>
            <person name="Nilsson R."/>
            <person name="Nishiguchi S."/>
            <person name="Nishikawa S."/>
            <person name="Nori F."/>
            <person name="Ohara O."/>
            <person name="Okazaki Y."/>
            <person name="Orlando V."/>
            <person name="Pang K.C."/>
            <person name="Pavan W.J."/>
            <person name="Pavesi G."/>
            <person name="Pesole G."/>
            <person name="Petrovsky N."/>
            <person name="Piazza S."/>
            <person name="Reed J."/>
            <person name="Reid J.F."/>
            <person name="Ring B.Z."/>
            <person name="Ringwald M."/>
            <person name="Rost B."/>
            <person name="Ruan Y."/>
            <person name="Salzberg S.L."/>
            <person name="Sandelin A."/>
            <person name="Schneider C."/>
            <person name="Schoenbach C."/>
            <person name="Sekiguchi K."/>
            <person name="Semple C.A."/>
            <person name="Seno S."/>
            <person name="Sessa L."/>
            <person name="Sheng Y."/>
            <person name="Shibata Y."/>
            <person name="Shimada H."/>
            <person name="Shimada K."/>
            <person name="Silva D."/>
            <person name="Sinclair B."/>
            <person name="Sperling S."/>
            <person name="Stupka E."/>
            <person name="Sugiura K."/>
            <person name="Sultana R."/>
            <person name="Takenaka Y."/>
            <person name="Taki K."/>
            <person name="Tammoja K."/>
            <person name="Tan S.L."/>
            <person name="Tang S."/>
            <person name="Taylor M.S."/>
            <person name="Tegner J."/>
            <person name="Teichmann S.A."/>
            <person name="Ueda H.R."/>
            <person name="van Nimwegen E."/>
            <person name="Verardo R."/>
            <person name="Wei C.L."/>
            <person name="Yagi K."/>
            <person name="Yamanishi H."/>
            <person name="Zabarovsky E."/>
            <person name="Zhu S."/>
            <person name="Zimmer A."/>
            <person name="Hide W."/>
            <person name="Bult C."/>
            <person name="Grimmond S.M."/>
            <person name="Teasdale R.D."/>
            <person name="Liu E.T."/>
            <person name="Brusic V."/>
            <person name="Quackenbush J."/>
            <person name="Wahlestedt C."/>
            <person name="Mattick J.S."/>
            <person name="Hume D.A."/>
            <person name="Kai C."/>
            <person name="Sasaki D."/>
            <person name="Tomaru Y."/>
            <person name="Fukuda S."/>
            <person name="Kanamori-Katayama M."/>
            <person name="Suzuki M."/>
            <person name="Aoki J."/>
            <person name="Arakawa T."/>
            <person name="Iida J."/>
            <person name="Imamura K."/>
            <person name="Itoh M."/>
            <person name="Kato T."/>
            <person name="Kawaji H."/>
            <person name="Kawagashira N."/>
            <person name="Kawashima T."/>
            <person name="Kojima M."/>
            <person name="Kondo S."/>
            <person name="Konno H."/>
            <person name="Nakano K."/>
            <person name="Ninomiya N."/>
            <person name="Nishio T."/>
            <person name="Okada M."/>
            <person name="Plessy C."/>
            <person name="Shibata K."/>
            <person name="Shiraki T."/>
            <person name="Suzuki S."/>
            <person name="Tagami M."/>
            <person name="Waki K."/>
            <person name="Watahiki A."/>
            <person name="Okamura-Oho Y."/>
            <person name="Suzuki H."/>
            <person name="Kawai J."/>
            <person name="Hayashizaki Y."/>
        </authorList>
    </citation>
    <scope>NUCLEOTIDE SEQUENCE [LARGE SCALE MRNA]</scope>
    <source>
        <strain>C57BL/6J</strain>
        <tissue>Testis</tissue>
    </source>
</reference>
<reference key="2">
    <citation type="journal article" date="2009" name="PLoS Biol.">
        <title>Lineage-specific biology revealed by a finished genome assembly of the mouse.</title>
        <authorList>
            <person name="Church D.M."/>
            <person name="Goodstadt L."/>
            <person name="Hillier L.W."/>
            <person name="Zody M.C."/>
            <person name="Goldstein S."/>
            <person name="She X."/>
            <person name="Bult C.J."/>
            <person name="Agarwala R."/>
            <person name="Cherry J.L."/>
            <person name="DiCuccio M."/>
            <person name="Hlavina W."/>
            <person name="Kapustin Y."/>
            <person name="Meric P."/>
            <person name="Maglott D."/>
            <person name="Birtle Z."/>
            <person name="Marques A.C."/>
            <person name="Graves T."/>
            <person name="Zhou S."/>
            <person name="Teague B."/>
            <person name="Potamousis K."/>
            <person name="Churas C."/>
            <person name="Place M."/>
            <person name="Herschleb J."/>
            <person name="Runnheim R."/>
            <person name="Forrest D."/>
            <person name="Amos-Landgraf J."/>
            <person name="Schwartz D.C."/>
            <person name="Cheng Z."/>
            <person name="Lindblad-Toh K."/>
            <person name="Eichler E.E."/>
            <person name="Ponting C.P."/>
        </authorList>
    </citation>
    <scope>NUCLEOTIDE SEQUENCE [LARGE SCALE GENOMIC DNA]</scope>
    <source>
        <strain>C57BL/6J</strain>
    </source>
</reference>
<proteinExistence type="evidence at transcript level"/>
<accession>Q3V0Y1</accession>
<accession>A2AG62</accession>
<name>P4R3C_MOUSE</name>
<feature type="chain" id="PRO_0000344448" description="Protein PPP4R3C1">
    <location>
        <begin position="1"/>
        <end position="813"/>
    </location>
</feature>
<feature type="region of interest" description="Disordered" evidence="2">
    <location>
        <begin position="730"/>
        <end position="813"/>
    </location>
</feature>
<feature type="compositionally biased region" description="Acidic residues" evidence="2">
    <location>
        <begin position="777"/>
        <end position="788"/>
    </location>
</feature>
<feature type="sequence conflict" description="In Ref. 1; BAE21372." evidence="3" ref="1">
    <original>N</original>
    <variation>K</variation>
    <location>
        <position position="311"/>
    </location>
</feature>
<protein>
    <recommendedName>
        <fullName evidence="3">Protein PPP4R3C1</fullName>
    </recommendedName>
    <alternativeName>
        <fullName evidence="1">SMEK homolog 3</fullName>
    </alternativeName>
    <alternativeName>
        <fullName evidence="1">Serine/threonine-protein phosphatase 4 regulatory subunit 3C</fullName>
    </alternativeName>
</protein>
<comment type="similarity">
    <text evidence="3">Belongs to the SMEK family.</text>
</comment>
<keyword id="KW-1185">Reference proteome</keyword>
<evidence type="ECO:0000250" key="1">
    <source>
        <dbReference type="UniProtKB" id="Q6ZMV5"/>
    </source>
</evidence>
<evidence type="ECO:0000256" key="2">
    <source>
        <dbReference type="SAM" id="MobiDB-lite"/>
    </source>
</evidence>
<evidence type="ECO:0000305" key="3"/>
<evidence type="ECO:0000312" key="4">
    <source>
        <dbReference type="MGI" id="MGI:3588286"/>
    </source>
</evidence>
<organism>
    <name type="scientific">Mus musculus</name>
    <name type="common">Mouse</name>
    <dbReference type="NCBI Taxonomy" id="10090"/>
    <lineage>
        <taxon>Eukaryota</taxon>
        <taxon>Metazoa</taxon>
        <taxon>Chordata</taxon>
        <taxon>Craniata</taxon>
        <taxon>Vertebrata</taxon>
        <taxon>Euteleostomi</taxon>
        <taxon>Mammalia</taxon>
        <taxon>Eutheria</taxon>
        <taxon>Euarchontoglires</taxon>
        <taxon>Glires</taxon>
        <taxon>Rodentia</taxon>
        <taxon>Myomorpha</taxon>
        <taxon>Muroidea</taxon>
        <taxon>Muridae</taxon>
        <taxon>Murinae</taxon>
        <taxon>Mus</taxon>
        <taxon>Mus</taxon>
    </lineage>
</organism>
<gene>
    <name evidence="4" type="primary">Ppp4r3c1</name>
    <name evidence="1" type="synonym">Ppp4r3cp</name>
    <name evidence="1" type="synonym">Smek3p</name>
</gene>